<evidence type="ECO:0000255" key="1">
    <source>
        <dbReference type="PROSITE-ProRule" id="PRU00723"/>
    </source>
</evidence>
<evidence type="ECO:0000256" key="2">
    <source>
        <dbReference type="SAM" id="MobiDB-lite"/>
    </source>
</evidence>
<evidence type="ECO:0000305" key="3"/>
<proteinExistence type="evidence at transcript level"/>
<dbReference type="EMBL" id="AP008212">
    <property type="protein sequence ID" value="BAF19655.1"/>
    <property type="molecule type" value="Genomic_DNA"/>
</dbReference>
<dbReference type="EMBL" id="AP014962">
    <property type="protein sequence ID" value="BAS98000.1"/>
    <property type="molecule type" value="Genomic_DNA"/>
</dbReference>
<dbReference type="EMBL" id="AK119453">
    <property type="status" value="NOT_ANNOTATED_CDS"/>
    <property type="molecule type" value="mRNA"/>
</dbReference>
<dbReference type="STRING" id="39947.Q0DBW8"/>
<dbReference type="PaxDb" id="39947-Q0DBW8"/>
<dbReference type="EnsemblPlants" id="Os06t0519400-01">
    <property type="protein sequence ID" value="Os06t0519400-01"/>
    <property type="gene ID" value="Os06g0519400"/>
</dbReference>
<dbReference type="Gramene" id="Os06t0519400-01">
    <property type="protein sequence ID" value="Os06t0519400-01"/>
    <property type="gene ID" value="Os06g0519400"/>
</dbReference>
<dbReference type="KEGG" id="dosa:Os06g0519400"/>
<dbReference type="eggNOG" id="KOG1677">
    <property type="taxonomic scope" value="Eukaryota"/>
</dbReference>
<dbReference type="HOGENOM" id="CLU_984780_0_0_1"/>
<dbReference type="InParanoid" id="Q0DBW8"/>
<dbReference type="OMA" id="WCDPELA"/>
<dbReference type="Proteomes" id="UP000000763">
    <property type="component" value="Chromosome 6"/>
</dbReference>
<dbReference type="Proteomes" id="UP000059680">
    <property type="component" value="Chromosome 6"/>
</dbReference>
<dbReference type="GO" id="GO:0003677">
    <property type="term" value="F:DNA binding"/>
    <property type="evidence" value="ECO:0007669"/>
    <property type="project" value="UniProtKB-KW"/>
</dbReference>
<dbReference type="GO" id="GO:0003729">
    <property type="term" value="F:mRNA binding"/>
    <property type="evidence" value="ECO:0000318"/>
    <property type="project" value="GO_Central"/>
</dbReference>
<dbReference type="GO" id="GO:0008270">
    <property type="term" value="F:zinc ion binding"/>
    <property type="evidence" value="ECO:0007669"/>
    <property type="project" value="UniProtKB-KW"/>
</dbReference>
<dbReference type="Gene3D" id="2.30.30.1190">
    <property type="match status" value="1"/>
</dbReference>
<dbReference type="Gene3D" id="4.10.1000.10">
    <property type="entry name" value="Zinc finger, CCCH-type"/>
    <property type="match status" value="1"/>
</dbReference>
<dbReference type="InterPro" id="IPR050974">
    <property type="entry name" value="Plant_ZF_CCCH"/>
</dbReference>
<dbReference type="InterPro" id="IPR000571">
    <property type="entry name" value="Znf_CCCH"/>
</dbReference>
<dbReference type="InterPro" id="IPR036855">
    <property type="entry name" value="Znf_CCCH_sf"/>
</dbReference>
<dbReference type="PANTHER" id="PTHR12506">
    <property type="entry name" value="PROTEIN PHOSPHATASE RELATED"/>
    <property type="match status" value="1"/>
</dbReference>
<dbReference type="PANTHER" id="PTHR12506:SF50">
    <property type="entry name" value="ZINC FINGER CCCH DOMAIN-CONTAINING PROTEIN 26"/>
    <property type="match status" value="1"/>
</dbReference>
<dbReference type="Pfam" id="PF00642">
    <property type="entry name" value="zf-CCCH"/>
    <property type="match status" value="3"/>
</dbReference>
<dbReference type="SMART" id="SM00356">
    <property type="entry name" value="ZnF_C3H1"/>
    <property type="match status" value="3"/>
</dbReference>
<dbReference type="SUPFAM" id="SSF90229">
    <property type="entry name" value="CCCH zinc finger"/>
    <property type="match status" value="2"/>
</dbReference>
<dbReference type="PROSITE" id="PS50103">
    <property type="entry name" value="ZF_C3H1"/>
    <property type="match status" value="3"/>
</dbReference>
<comment type="sequence caution" evidence="3">
    <conflict type="erroneous termination">
        <sequence resource="EMBL" id="AK119453"/>
    </conflict>
    <text>Truncated C-terminus.</text>
</comment>
<gene>
    <name type="ordered locus">Os06g0519400</name>
    <name type="ordered locus">LOC_Os06g32720</name>
</gene>
<reference key="1">
    <citation type="journal article" date="2005" name="Nature">
        <title>The map-based sequence of the rice genome.</title>
        <authorList>
            <consortium name="International rice genome sequencing project (IRGSP)"/>
        </authorList>
    </citation>
    <scope>NUCLEOTIDE SEQUENCE [LARGE SCALE GENOMIC DNA]</scope>
    <source>
        <strain>cv. Nipponbare</strain>
    </source>
</reference>
<reference key="2">
    <citation type="journal article" date="2008" name="Nucleic Acids Res.">
        <title>The rice annotation project database (RAP-DB): 2008 update.</title>
        <authorList>
            <consortium name="The rice annotation project (RAP)"/>
        </authorList>
    </citation>
    <scope>GENOME REANNOTATION</scope>
    <source>
        <strain>cv. Nipponbare</strain>
    </source>
</reference>
<reference key="3">
    <citation type="journal article" date="2013" name="Rice">
        <title>Improvement of the Oryza sativa Nipponbare reference genome using next generation sequence and optical map data.</title>
        <authorList>
            <person name="Kawahara Y."/>
            <person name="de la Bastide M."/>
            <person name="Hamilton J.P."/>
            <person name="Kanamori H."/>
            <person name="McCombie W.R."/>
            <person name="Ouyang S."/>
            <person name="Schwartz D.C."/>
            <person name="Tanaka T."/>
            <person name="Wu J."/>
            <person name="Zhou S."/>
            <person name="Childs K.L."/>
            <person name="Davidson R.M."/>
            <person name="Lin H."/>
            <person name="Quesada-Ocampo L."/>
            <person name="Vaillancourt B."/>
            <person name="Sakai H."/>
            <person name="Lee S.S."/>
            <person name="Kim J."/>
            <person name="Numa H."/>
            <person name="Itoh T."/>
            <person name="Buell C.R."/>
            <person name="Matsumoto T."/>
        </authorList>
    </citation>
    <scope>GENOME REANNOTATION</scope>
    <source>
        <strain>cv. Nipponbare</strain>
    </source>
</reference>
<reference key="4">
    <citation type="journal article" date="2003" name="Science">
        <title>Collection, mapping, and annotation of over 28,000 cDNA clones from japonica rice.</title>
        <authorList>
            <consortium name="The rice full-length cDNA consortium"/>
        </authorList>
    </citation>
    <scope>NUCLEOTIDE SEQUENCE [LARGE SCALE MRNA]</scope>
    <source>
        <strain>cv. Nipponbare</strain>
    </source>
</reference>
<reference key="5">
    <citation type="journal article" date="2008" name="BMC Genomics">
        <title>Genome-wide analysis of CCCH zinc finger family in Arabidopsis and rice.</title>
        <authorList>
            <person name="Wang D."/>
            <person name="Guo Y."/>
            <person name="Wu C."/>
            <person name="Yang G."/>
            <person name="Li Y."/>
            <person name="Zheng C."/>
        </authorList>
    </citation>
    <scope>NOMENCLATURE</scope>
</reference>
<accession>Q0DBW8</accession>
<accession>A0A0P0WX58</accession>
<protein>
    <recommendedName>
        <fullName>Zinc finger CCCH domain-containing protein 42</fullName>
        <shortName>OsC3H42</shortName>
    </recommendedName>
</protein>
<feature type="chain" id="PRO_0000346836" description="Zinc finger CCCH domain-containing protein 42">
    <location>
        <begin position="1"/>
        <end position="279"/>
    </location>
</feature>
<feature type="zinc finger region" description="C3H1-type 1" evidence="1">
    <location>
        <begin position="79"/>
        <end position="107"/>
    </location>
</feature>
<feature type="zinc finger region" description="C3H1-type 2" evidence="1">
    <location>
        <begin position="120"/>
        <end position="148"/>
    </location>
</feature>
<feature type="zinc finger region" description="C3H1-type 3" evidence="1">
    <location>
        <begin position="186"/>
        <end position="214"/>
    </location>
</feature>
<feature type="region of interest" description="Disordered" evidence="2">
    <location>
        <begin position="11"/>
        <end position="77"/>
    </location>
</feature>
<feature type="compositionally biased region" description="Low complexity" evidence="2">
    <location>
        <begin position="16"/>
        <end position="39"/>
    </location>
</feature>
<name>C3H42_ORYSJ</name>
<sequence>MMQILCECCNSDHRSSSTPMATTTSSSASDPAAISPTPSQQHASSTVKTLDDRRPAGTSSSAGETEPKAAVEPQEYPRRPGVPDCSYYVEFGSCKFGMRCLYNHPAKHAGGCDKLEHPQRPGEHDCLHYLRFGRCKYGMNCRFNHPPDRLPQQQVYFPWKACHCHHSEGKSEAEHVKLNFLGLPLRPGTGLCSYYMNRGICKFGSNCKFHHPNSGSGHEKWDGSLQTNQISSGVNIYSVLDHGELNEQPVPSKDDFQVSFVQNIVGFNFYIWCDPELAP</sequence>
<organism>
    <name type="scientific">Oryza sativa subsp. japonica</name>
    <name type="common">Rice</name>
    <dbReference type="NCBI Taxonomy" id="39947"/>
    <lineage>
        <taxon>Eukaryota</taxon>
        <taxon>Viridiplantae</taxon>
        <taxon>Streptophyta</taxon>
        <taxon>Embryophyta</taxon>
        <taxon>Tracheophyta</taxon>
        <taxon>Spermatophyta</taxon>
        <taxon>Magnoliopsida</taxon>
        <taxon>Liliopsida</taxon>
        <taxon>Poales</taxon>
        <taxon>Poaceae</taxon>
        <taxon>BOP clade</taxon>
        <taxon>Oryzoideae</taxon>
        <taxon>Oryzeae</taxon>
        <taxon>Oryzinae</taxon>
        <taxon>Oryza</taxon>
        <taxon>Oryza sativa</taxon>
    </lineage>
</organism>
<keyword id="KW-0238">DNA-binding</keyword>
<keyword id="KW-0479">Metal-binding</keyword>
<keyword id="KW-1185">Reference proteome</keyword>
<keyword id="KW-0677">Repeat</keyword>
<keyword id="KW-0862">Zinc</keyword>
<keyword id="KW-0863">Zinc-finger</keyword>